<proteinExistence type="inferred from homology"/>
<name>RBL_MALDO</name>
<comment type="function">
    <text evidence="1">RuBisCO catalyzes two reactions: the carboxylation of D-ribulose 1,5-bisphosphate, the primary event in carbon dioxide fixation, as well as the oxidative fragmentation of the pentose substrate in the photorespiration process. Both reactions occur simultaneously and in competition at the same active site (By similarity).</text>
</comment>
<comment type="catalytic activity">
    <reaction>
        <text>2 (2R)-3-phosphoglycerate + 2 H(+) = D-ribulose 1,5-bisphosphate + CO2 + H2O</text>
        <dbReference type="Rhea" id="RHEA:23124"/>
        <dbReference type="ChEBI" id="CHEBI:15377"/>
        <dbReference type="ChEBI" id="CHEBI:15378"/>
        <dbReference type="ChEBI" id="CHEBI:16526"/>
        <dbReference type="ChEBI" id="CHEBI:57870"/>
        <dbReference type="ChEBI" id="CHEBI:58272"/>
        <dbReference type="EC" id="4.1.1.39"/>
    </reaction>
</comment>
<comment type="catalytic activity">
    <reaction>
        <text>D-ribulose 1,5-bisphosphate + O2 = 2-phosphoglycolate + (2R)-3-phosphoglycerate + 2 H(+)</text>
        <dbReference type="Rhea" id="RHEA:36631"/>
        <dbReference type="ChEBI" id="CHEBI:15378"/>
        <dbReference type="ChEBI" id="CHEBI:15379"/>
        <dbReference type="ChEBI" id="CHEBI:57870"/>
        <dbReference type="ChEBI" id="CHEBI:58033"/>
        <dbReference type="ChEBI" id="CHEBI:58272"/>
    </reaction>
</comment>
<comment type="subunit">
    <text evidence="1">Heterohexadecamer of 8 large chains and 8 small chains.</text>
</comment>
<comment type="subcellular location">
    <subcellularLocation>
        <location>Plastid</location>
        <location>Chloroplast</location>
    </subcellularLocation>
</comment>
<comment type="miscellaneous">
    <text evidence="1">The basic functional RuBisCO is composed of a large chain homodimer in a 'head-to-tail' conformation. In form I RuBisCO this homodimer is arranged in a barrel-like tetramer with the small subunits forming a tetrameric 'cap' on each end of the 'barrel' (By similarity).</text>
</comment>
<comment type="similarity">
    <text evidence="2">Belongs to the RuBisCO large chain family. Type I subfamily.</text>
</comment>
<gene>
    <name type="primary">rbcL</name>
</gene>
<keyword id="KW-0007">Acetylation</keyword>
<keyword id="KW-0113">Calvin cycle</keyword>
<keyword id="KW-0120">Carbon dioxide fixation</keyword>
<keyword id="KW-0150">Chloroplast</keyword>
<keyword id="KW-0456">Lyase</keyword>
<keyword id="KW-0488">Methylation</keyword>
<keyword id="KW-0503">Monooxygenase</keyword>
<keyword id="KW-0560">Oxidoreductase</keyword>
<keyword id="KW-0601">Photorespiration</keyword>
<keyword id="KW-0602">Photosynthesis</keyword>
<keyword id="KW-0934">Plastid</keyword>
<evidence type="ECO:0000250" key="1"/>
<evidence type="ECO:0000305" key="2"/>
<geneLocation type="chloroplast"/>
<protein>
    <recommendedName>
        <fullName>Ribulose bisphosphate carboxylase large chain</fullName>
        <shortName>RuBisCO large subunit</shortName>
        <ecNumber>4.1.1.39</ecNumber>
    </recommendedName>
</protein>
<organism>
    <name type="scientific">Malus domestica</name>
    <name type="common">Apple</name>
    <name type="synonym">Pyrus malus</name>
    <dbReference type="NCBI Taxonomy" id="3750"/>
    <lineage>
        <taxon>Eukaryota</taxon>
        <taxon>Viridiplantae</taxon>
        <taxon>Streptophyta</taxon>
        <taxon>Embryophyta</taxon>
        <taxon>Tracheophyta</taxon>
        <taxon>Spermatophyta</taxon>
        <taxon>Magnoliopsida</taxon>
        <taxon>eudicotyledons</taxon>
        <taxon>Gunneridae</taxon>
        <taxon>Pentapetalae</taxon>
        <taxon>rosids</taxon>
        <taxon>fabids</taxon>
        <taxon>Rosales</taxon>
        <taxon>Rosaceae</taxon>
        <taxon>Amygdaloideae</taxon>
        <taxon>Maleae</taxon>
        <taxon>Malus</taxon>
    </lineage>
</organism>
<dbReference type="EC" id="4.1.1.39"/>
<dbReference type="EMBL" id="X69750">
    <property type="protein sequence ID" value="CAA49405.1"/>
    <property type="molecule type" value="Genomic_DNA"/>
</dbReference>
<dbReference type="EMBL" id="X69749">
    <property type="protein sequence ID" value="CAA49404.1"/>
    <property type="molecule type" value="Genomic_DNA"/>
</dbReference>
<dbReference type="PIR" id="S31531">
    <property type="entry name" value="S31531"/>
</dbReference>
<dbReference type="SMR" id="P31194"/>
<dbReference type="GO" id="GO:0009507">
    <property type="term" value="C:chloroplast"/>
    <property type="evidence" value="ECO:0007669"/>
    <property type="project" value="UniProtKB-SubCell"/>
</dbReference>
<dbReference type="GO" id="GO:0004497">
    <property type="term" value="F:monooxygenase activity"/>
    <property type="evidence" value="ECO:0007669"/>
    <property type="project" value="UniProtKB-KW"/>
</dbReference>
<dbReference type="GO" id="GO:0016984">
    <property type="term" value="F:ribulose-bisphosphate carboxylase activity"/>
    <property type="evidence" value="ECO:0007669"/>
    <property type="project" value="UniProtKB-EC"/>
</dbReference>
<dbReference type="GO" id="GO:0009853">
    <property type="term" value="P:photorespiration"/>
    <property type="evidence" value="ECO:0007669"/>
    <property type="project" value="UniProtKB-KW"/>
</dbReference>
<dbReference type="GO" id="GO:0019253">
    <property type="term" value="P:reductive pentose-phosphate cycle"/>
    <property type="evidence" value="ECO:0007669"/>
    <property type="project" value="UniProtKB-KW"/>
</dbReference>
<dbReference type="Gene3D" id="3.30.70.150">
    <property type="entry name" value="RuBisCO large subunit, N-terminal domain"/>
    <property type="match status" value="1"/>
</dbReference>
<dbReference type="InterPro" id="IPR033966">
    <property type="entry name" value="RuBisCO"/>
</dbReference>
<dbReference type="InterPro" id="IPR017443">
    <property type="entry name" value="RuBisCO_lsu_fd_N"/>
</dbReference>
<dbReference type="InterPro" id="IPR036422">
    <property type="entry name" value="RuBisCO_lsu_N_sf"/>
</dbReference>
<dbReference type="PANTHER" id="PTHR42704">
    <property type="entry name" value="RIBULOSE BISPHOSPHATE CARBOXYLASE"/>
    <property type="match status" value="1"/>
</dbReference>
<dbReference type="PANTHER" id="PTHR42704:SF15">
    <property type="entry name" value="RIBULOSE BISPHOSPHATE CARBOXYLASE LARGE CHAIN"/>
    <property type="match status" value="1"/>
</dbReference>
<dbReference type="Pfam" id="PF02788">
    <property type="entry name" value="RuBisCO_large_N"/>
    <property type="match status" value="1"/>
</dbReference>
<dbReference type="SUPFAM" id="SSF54966">
    <property type="entry name" value="RuBisCO, large subunit, small (N-terminal) domain"/>
    <property type="match status" value="1"/>
</dbReference>
<reference key="1">
    <citation type="journal article" date="1994" name="Mol. Phylogenet. Evol.">
        <title>Molecular phylogeny of families related to Celastrales based on rbcL 5' flanking sequences.</title>
        <authorList>
            <person name="Savolainen V."/>
            <person name="Manen J.F."/>
            <person name="Douzery E.J.P."/>
            <person name="Spichiger R."/>
        </authorList>
    </citation>
    <scope>NUCLEOTIDE SEQUENCE [GENOMIC DNA]</scope>
    <source>
        <strain>cv. Discovery</strain>
        <strain>cv. Idared</strain>
    </source>
</reference>
<accession>P31194</accession>
<sequence>MSPQTETKASVGFKAGVKDYKLTYYTPDYETKDTDILAAFRVTPQPGVPPEEA</sequence>
<feature type="propeptide" id="PRO_0000031297" evidence="1">
    <location>
        <begin position="1"/>
        <end position="2"/>
    </location>
</feature>
<feature type="chain" id="PRO_0000031298" description="Ribulose bisphosphate carboxylase large chain">
    <location>
        <begin position="3"/>
        <end position="53" status="greater than"/>
    </location>
</feature>
<feature type="modified residue" description="N-acetylproline" evidence="1">
    <location>
        <position position="3"/>
    </location>
</feature>
<feature type="modified residue" description="N6,N6,N6-trimethyllysine" evidence="1">
    <location>
        <position position="14"/>
    </location>
</feature>
<feature type="non-terminal residue">
    <location>
        <position position="53"/>
    </location>
</feature>